<comment type="function">
    <text evidence="7">Required for the assembly and the contraction of the actomyosin ring at the bud neck during cytokinesis.</text>
</comment>
<comment type="subunit">
    <text evidence="2 7">Interacts with myosin MYO1 and its light chain MLC1 (By similarity). Interacts with BNI1 (PubMed:18923418). Interacts with BNR1 (PubMed:18923418). Interacts with CLB2 (PubMed:18923418). Interacts with CLB4 (PubMed:18923418). Interacts with CDC28 (PubMed:18923418).</text>
</comment>
<comment type="subcellular location">
    <subcellularLocation>
        <location evidence="7">Bud neck</location>
    </subcellularLocation>
    <text>Forms a ring at the bud neck in a MLC1-dependent manner, which contracts at the end of cytokinesis.</text>
</comment>
<comment type="induction">
    <text evidence="8">Rat catheter biofilm repressed.</text>
</comment>
<comment type="domain">
    <text evidence="7">The calponin homology (CH) domain binds to actin filaments and is required for their recruitment to the bud neck.</text>
</comment>
<comment type="domain">
    <text evidence="2">The IQ domains provide the interaction surface for the myosin light chain MLC1.</text>
</comment>
<comment type="domain">
    <text evidence="1">The Ras-GAP domain is required for contraction of the actomyosin ring. It probably does not stimulate GTPase activity (By similarity).</text>
</comment>
<comment type="PTM">
    <text evidence="7">Hyperphosphorylated. Phosphorylation is cell cycle-dependent and peaks at the time of cytokinesis. Contains 21 consensus sites for cyclin-dependent kinases (CDKs). At least some of them are phosphorylated by the CLB2-CDC28 kinase complex. Mutation of 15 of the phosphorylation sites to Ala caused both premature assembly and delayed disassembly of the actomyosin ring, blocked interaction with the actin-nucleating proteins BNI1 and BNR1, and resulted in defects in cytokinesis.</text>
</comment>
<dbReference type="EMBL" id="CP017629">
    <property type="protein sequence ID" value="AOW30549.1"/>
    <property type="molecule type" value="Genomic_DNA"/>
</dbReference>
<dbReference type="RefSeq" id="XP_721374.2">
    <property type="nucleotide sequence ID" value="XM_716281.2"/>
</dbReference>
<dbReference type="SMR" id="Q5AH02"/>
<dbReference type="BioGRID" id="1220146">
    <property type="interactions" value="6"/>
</dbReference>
<dbReference type="FunCoup" id="Q5AH02">
    <property type="interactions" value="390"/>
</dbReference>
<dbReference type="IntAct" id="Q5AH02">
    <property type="interactions" value="5"/>
</dbReference>
<dbReference type="MINT" id="Q5AH02"/>
<dbReference type="STRING" id="237561.Q5AH02"/>
<dbReference type="iPTMnet" id="Q5AH02"/>
<dbReference type="EnsemblFungi" id="C7_01840W_A-T">
    <property type="protein sequence ID" value="C7_01840W_A-T-p1"/>
    <property type="gene ID" value="C7_01840W_A"/>
</dbReference>
<dbReference type="GeneID" id="3637052"/>
<dbReference type="KEGG" id="cal:CAALFM_C701840WA"/>
<dbReference type="CGD" id="CAL0000175167">
    <property type="gene designation" value="IQG1"/>
</dbReference>
<dbReference type="VEuPathDB" id="FungiDB:C7_01840W_A"/>
<dbReference type="eggNOG" id="KOG2128">
    <property type="taxonomic scope" value="Eukaryota"/>
</dbReference>
<dbReference type="HOGENOM" id="CLU_000972_1_0_1"/>
<dbReference type="InParanoid" id="Q5AH02"/>
<dbReference type="OrthoDB" id="775356at2759"/>
<dbReference type="Proteomes" id="UP000000559">
    <property type="component" value="Chromosome 7"/>
</dbReference>
<dbReference type="GO" id="GO:0005938">
    <property type="term" value="C:cell cortex"/>
    <property type="evidence" value="ECO:0000318"/>
    <property type="project" value="GO_Central"/>
</dbReference>
<dbReference type="GO" id="GO:0000142">
    <property type="term" value="C:cellular bud neck contractile ring"/>
    <property type="evidence" value="ECO:0000314"/>
    <property type="project" value="CGD"/>
</dbReference>
<dbReference type="GO" id="GO:0110085">
    <property type="term" value="C:mitotic actomyosin contractile ring"/>
    <property type="evidence" value="ECO:0000318"/>
    <property type="project" value="GO_Central"/>
</dbReference>
<dbReference type="GO" id="GO:0051015">
    <property type="term" value="F:actin filament binding"/>
    <property type="evidence" value="ECO:0000318"/>
    <property type="project" value="GO_Central"/>
</dbReference>
<dbReference type="GO" id="GO:0005516">
    <property type="term" value="F:calmodulin binding"/>
    <property type="evidence" value="ECO:0000318"/>
    <property type="project" value="GO_Central"/>
</dbReference>
<dbReference type="GO" id="GO:0008092">
    <property type="term" value="F:cytoskeletal protein binding"/>
    <property type="evidence" value="ECO:0000314"/>
    <property type="project" value="CGD"/>
</dbReference>
<dbReference type="GO" id="GO:0005096">
    <property type="term" value="F:GTPase activator activity"/>
    <property type="evidence" value="ECO:0000318"/>
    <property type="project" value="GO_Central"/>
</dbReference>
<dbReference type="GO" id="GO:0000915">
    <property type="term" value="P:actomyosin contractile ring assembly"/>
    <property type="evidence" value="ECO:0000315"/>
    <property type="project" value="CGD"/>
</dbReference>
<dbReference type="GO" id="GO:1903479">
    <property type="term" value="P:mitotic actomyosin contractile ring assembly actin filament organization"/>
    <property type="evidence" value="ECO:0000318"/>
    <property type="project" value="GO_Central"/>
</dbReference>
<dbReference type="CDD" id="cd21206">
    <property type="entry name" value="CH_IQGAP"/>
    <property type="match status" value="1"/>
</dbReference>
<dbReference type="CDD" id="cd12206">
    <property type="entry name" value="RasGAP_IQGAP_related"/>
    <property type="match status" value="1"/>
</dbReference>
<dbReference type="Gene3D" id="1.10.418.10">
    <property type="entry name" value="Calponin-like domain"/>
    <property type="match status" value="1"/>
</dbReference>
<dbReference type="Gene3D" id="1.10.506.10">
    <property type="entry name" value="GTPase Activation - p120gap, domain 1"/>
    <property type="match status" value="1"/>
</dbReference>
<dbReference type="InterPro" id="IPR001715">
    <property type="entry name" value="CH_dom"/>
</dbReference>
<dbReference type="InterPro" id="IPR036872">
    <property type="entry name" value="CH_dom_sf"/>
</dbReference>
<dbReference type="InterPro" id="IPR000593">
    <property type="entry name" value="RasGAP_C"/>
</dbReference>
<dbReference type="InterPro" id="IPR001936">
    <property type="entry name" value="RasGAP_dom"/>
</dbReference>
<dbReference type="InterPro" id="IPR008936">
    <property type="entry name" value="Rho_GTPase_activation_prot"/>
</dbReference>
<dbReference type="PANTHER" id="PTHR14149:SF14">
    <property type="entry name" value="CALPONIN-HOMOLOGY (CH) DOMAIN-CONTAINING PROTEIN"/>
    <property type="match status" value="1"/>
</dbReference>
<dbReference type="PANTHER" id="PTHR14149">
    <property type="entry name" value="RAS GTPASE-ACTIVATING PROTEIN WITH IQ MOTIF"/>
    <property type="match status" value="1"/>
</dbReference>
<dbReference type="Pfam" id="PF00616">
    <property type="entry name" value="RasGAP"/>
    <property type="match status" value="1"/>
</dbReference>
<dbReference type="Pfam" id="PF03836">
    <property type="entry name" value="RasGAP_C"/>
    <property type="match status" value="1"/>
</dbReference>
<dbReference type="SMART" id="SM00033">
    <property type="entry name" value="CH"/>
    <property type="match status" value="1"/>
</dbReference>
<dbReference type="SUPFAM" id="SSF47576">
    <property type="entry name" value="Calponin-homology domain, CH-domain"/>
    <property type="match status" value="1"/>
</dbReference>
<dbReference type="SUPFAM" id="SSF48350">
    <property type="entry name" value="GTPase activation domain, GAP"/>
    <property type="match status" value="1"/>
</dbReference>
<dbReference type="SUPFAM" id="SSF143885">
    <property type="entry name" value="RGC domain-like"/>
    <property type="match status" value="1"/>
</dbReference>
<dbReference type="PROSITE" id="PS50021">
    <property type="entry name" value="CH"/>
    <property type="match status" value="1"/>
</dbReference>
<dbReference type="PROSITE" id="PS50018">
    <property type="entry name" value="RAS_GTPASE_ACTIV_2"/>
    <property type="match status" value="1"/>
</dbReference>
<proteinExistence type="evidence at protein level"/>
<protein>
    <recommendedName>
        <fullName>Ras GTPase-activating-like protein IQG1</fullName>
    </recommendedName>
    <alternativeName>
        <fullName>Cytokinesis protein 1</fullName>
    </alternativeName>
    <alternativeName>
        <fullName>IQGAP-related protein 1</fullName>
    </alternativeName>
</protein>
<accession>Q5AH02</accession>
<accession>A0A1D8PQY8</accession>
<accession>Q3MPF8</accession>
<keyword id="KW-0009">Actin-binding</keyword>
<keyword id="KW-0131">Cell cycle</keyword>
<keyword id="KW-0132">Cell division</keyword>
<keyword id="KW-0175">Coiled coil</keyword>
<keyword id="KW-0597">Phosphoprotein</keyword>
<keyword id="KW-1185">Reference proteome</keyword>
<keyword id="KW-0677">Repeat</keyword>
<name>IQG1_CANAL</name>
<evidence type="ECO:0000250" key="1"/>
<evidence type="ECO:0000250" key="2">
    <source>
        <dbReference type="UniProtKB" id="Q12280"/>
    </source>
</evidence>
<evidence type="ECO:0000255" key="3"/>
<evidence type="ECO:0000255" key="4">
    <source>
        <dbReference type="PROSITE-ProRule" id="PRU00044"/>
    </source>
</evidence>
<evidence type="ECO:0000255" key="5">
    <source>
        <dbReference type="PROSITE-ProRule" id="PRU00167"/>
    </source>
</evidence>
<evidence type="ECO:0000256" key="6">
    <source>
        <dbReference type="SAM" id="MobiDB-lite"/>
    </source>
</evidence>
<evidence type="ECO:0000269" key="7">
    <source>
    </source>
</evidence>
<evidence type="ECO:0000269" key="8">
    <source>
    </source>
</evidence>
<organism>
    <name type="scientific">Candida albicans (strain SC5314 / ATCC MYA-2876)</name>
    <name type="common">Yeast</name>
    <dbReference type="NCBI Taxonomy" id="237561"/>
    <lineage>
        <taxon>Eukaryota</taxon>
        <taxon>Fungi</taxon>
        <taxon>Dikarya</taxon>
        <taxon>Ascomycota</taxon>
        <taxon>Saccharomycotina</taxon>
        <taxon>Pichiomycetes</taxon>
        <taxon>Debaryomycetaceae</taxon>
        <taxon>Candida/Lodderomyces clade</taxon>
        <taxon>Candida</taxon>
    </lineage>
</organism>
<sequence>MAIGNIAARYLSSLEETDTTATTTTTTTSNVLQPSNRLNSPTKFNRKSLDNNSQDLDALARALNITPSKPETPTSISKGSATSLLRTKFESPSATVSSFKSTSSSNGVSPTKKNHFVEITSDETPSWANKNYKDILNKSPTKFNTQSNVHTPLKQLNQPIGTPSSSSLSPAKNASKSSPGYEYLCRIEAIKQWLESVLQEQITQSASQLISYIRNGIHLAKLANVVLPTSKPVFLNDSKLQFKHTENINRFFQLLDFFNMPDLFRFELTDLYDAKNVPKVWFCLHALSYILHKQDPSYPAMNNLVGKVDFSADDIRTANRALVNSPLPNFSSADTGEGKSDTSNNNSSTTSATAAFMDKVTSPVKKTPSPLKRPQQLQKKQLELVEDNKPELTQDSSGLSKISRDDPFTDRVDLAPPSTSNAKLELHTPPSKSLEFKIKSPIIDLSHRDSDYYTPELESHLPNIIKFQSLARGAVFRYLMFVDRILLKSYQDEFTNLFAIIRGNKARRKTVHKHRDELRLYSFEIIELQSIIRKNFVINKKPNFTSITNDVETVELQSLIRGKLTRDWKKYVTNGLEKFTPQIIDFQSLVRMKSIYSKSNKVISYKDEILPSLIELQSIARSQLYHRFSRSNAIDETEIIKIQSIIRRNAVIEDLYTKLSKVRSNKRRLIELQSIARGGVARTKLCNSVLVTLIYEDGILNQLFAKIRGDNYRKKFNSQKSELLKYEKSSIIPVQTLFRGVLSRYTKEVTLSDIFDQIDSVITLQSVARGKLMRGSIYEFSDYYQKHIKQVVKAQAILQRVFAQNAYKQLITSKNPPLKVIRRFAPLLSNNDRDFQDEMTLSDLKDLIIEKCKANEEYENQIEQLDMKLGLLDKNKISIEEFLKPTKGKTFKPIVENVKNLERLNKSLKKKIELWQTLFYFIQTNPIYLTKLFNSIPYTKNQTKSGQDLFQSVIQLFPVRDSSITYHSREEYFLVKLMIQLMQNDTANSNNLGDITKLHLTNWIDFFTNFNNHTFQRQHLKALLGKFVIRIVDNEQVDFESDPIRIYNQIIDHEMKVYGRSEKSRDISPQAAIQLPEVSNKFVGNLMSLRETCSDLLSMLQKNASGNKALLQIPDHVKLICRQGYLCAQRKFPDKSDQQHLAVAGVIFVKHYLGSILQVPENYGILTGNNDTQKAKSKDNLRYLYRVMLQLFSMKPFNDNFLKPLNEYIMASTDTVKSIISQAIINVGEIETVYELHDYDDLVTHQRPKLTISVNSLIQLEKSILQNVDIITTGNDDQLYKTCVEVEKLLISPQDMLTLTDLSSVTLNLNPTTQEESIVDSKTKTLFTQAKRCLLYIIRVQEEDDSDDLLELLISGIKPSHEQRFKEIVQYEKAEQDISLNNSKSVTANTVNKKKSTRPYSGTSLGDLSNLTYHELKKMCLEIILKLESMGELTRKNSFQTLLNQIAMDIKTKDSQRQCRWQQLQVSQKTIKKLSEKENYLKTQLHNYKKHVESVLLELQSKSKSNDKNWKRRLFNIMVIPVFSKQYFYHRELRKHNRLPKFGSYKYSAKKLIDQKVLIDFSTANNVATASKLDFMFSCHQVGKFTIEVASGTVNIPGATNTITLDELLALQYENKTKFELFDGMATFDSNNFMGLIFRKFYDLKKE</sequence>
<gene>
    <name type="primary">IQG1</name>
    <name type="ordered locus">CAALFM_C701840WA</name>
    <name type="ORF">CaO19.13889</name>
    <name type="ORF">CaO19.6536</name>
</gene>
<reference key="1">
    <citation type="journal article" date="2004" name="Proc. Natl. Acad. Sci. U.S.A.">
        <title>The diploid genome sequence of Candida albicans.</title>
        <authorList>
            <person name="Jones T."/>
            <person name="Federspiel N.A."/>
            <person name="Chibana H."/>
            <person name="Dungan J."/>
            <person name="Kalman S."/>
            <person name="Magee B.B."/>
            <person name="Newport G."/>
            <person name="Thorstenson Y.R."/>
            <person name="Agabian N."/>
            <person name="Magee P.T."/>
            <person name="Davis R.W."/>
            <person name="Scherer S."/>
        </authorList>
    </citation>
    <scope>NUCLEOTIDE SEQUENCE [LARGE SCALE GENOMIC DNA]</scope>
    <source>
        <strain>SC5314 / ATCC MYA-2876</strain>
    </source>
</reference>
<reference key="2">
    <citation type="journal article" date="2007" name="Genome Biol.">
        <title>Assembly of the Candida albicans genome into sixteen supercontigs aligned on the eight chromosomes.</title>
        <authorList>
            <person name="van het Hoog M."/>
            <person name="Rast T.J."/>
            <person name="Martchenko M."/>
            <person name="Grindle S."/>
            <person name="Dignard D."/>
            <person name="Hogues H."/>
            <person name="Cuomo C."/>
            <person name="Berriman M."/>
            <person name="Scherer S."/>
            <person name="Magee B.B."/>
            <person name="Whiteway M."/>
            <person name="Chibana H."/>
            <person name="Nantel A."/>
            <person name="Magee P.T."/>
        </authorList>
    </citation>
    <scope>GENOME REANNOTATION</scope>
    <source>
        <strain>SC5314 / ATCC MYA-2876</strain>
    </source>
</reference>
<reference key="3">
    <citation type="journal article" date="2013" name="Genome Biol.">
        <title>Assembly of a phased diploid Candida albicans genome facilitates allele-specific measurements and provides a simple model for repeat and indel structure.</title>
        <authorList>
            <person name="Muzzey D."/>
            <person name="Schwartz K."/>
            <person name="Weissman J.S."/>
            <person name="Sherlock G."/>
        </authorList>
    </citation>
    <scope>NUCLEOTIDE SEQUENCE [LARGE SCALE GENOMIC DNA]</scope>
    <scope>GENOME REANNOTATION</scope>
    <source>
        <strain>SC5314 / ATCC MYA-2876</strain>
    </source>
</reference>
<reference key="4">
    <citation type="journal article" date="2008" name="EMBO J.">
        <title>The IQGAP Iqg1 is a regulatory target of CDK for cytokinesis in Candida albicans.</title>
        <authorList>
            <person name="Li C.R."/>
            <person name="Wang Y.M."/>
            <person name="Wang Y."/>
        </authorList>
    </citation>
    <scope>FUNCTION</scope>
    <scope>SUBCELLULAR LOCATION</scope>
    <scope>INTERACTION WITH BNI1; BNR1; CLB2; CLB4 AND CDC28</scope>
    <scope>DOMAIN</scope>
    <scope>PHOSPHORYLATION AT SER-48; THR-66; THR-72; THR-82; SER-83; SER-91; SER-139; SER-165; SER-167; SER-169; THR-367; SER-369; SER-433; SER-440; SER-1064; SER-1068; SER-1088; SER-1383 AND SER-1385</scope>
</reference>
<reference key="5">
    <citation type="journal article" date="2009" name="J. Infect. Dis.">
        <title>Time course global gene expression analysis of an in vivo Candida biofilm.</title>
        <authorList>
            <person name="Nett J.E."/>
            <person name="Lepak A.J."/>
            <person name="Marchillo K."/>
            <person name="Andes D.R."/>
        </authorList>
    </citation>
    <scope>INDUCTION</scope>
</reference>
<feature type="chain" id="PRO_0000424604" description="Ras GTPase-activating-like protein IQG1">
    <location>
        <begin position="1"/>
        <end position="1647"/>
    </location>
</feature>
<feature type="domain" description="Calponin-homology (CH)" evidence="4">
    <location>
        <begin position="184"/>
        <end position="291"/>
    </location>
</feature>
<feature type="domain" description="IQ 1">
    <location>
        <begin position="467"/>
        <end position="478"/>
    </location>
</feature>
<feature type="domain" description="IQ 2">
    <location>
        <begin position="528"/>
        <end position="539"/>
    </location>
</feature>
<feature type="domain" description="IQ 3">
    <location>
        <begin position="556"/>
        <end position="567"/>
    </location>
</feature>
<feature type="domain" description="IQ 4">
    <location>
        <begin position="586"/>
        <end position="597"/>
    </location>
</feature>
<feature type="domain" description="IQ 5">
    <location>
        <begin position="616"/>
        <end position="627"/>
    </location>
</feature>
<feature type="domain" description="IQ 6">
    <location>
        <begin position="642"/>
        <end position="653"/>
    </location>
</feature>
<feature type="domain" description="IQ 7">
    <location>
        <begin position="672"/>
        <end position="683"/>
    </location>
</feature>
<feature type="domain" description="IQ 8">
    <location>
        <begin position="734"/>
        <end position="745"/>
    </location>
</feature>
<feature type="domain" description="IQ 9">
    <location>
        <begin position="764"/>
        <end position="775"/>
    </location>
</feature>
<feature type="domain" description="Ras-GAP" evidence="5">
    <location>
        <begin position="958"/>
        <end position="1223"/>
    </location>
</feature>
<feature type="region of interest" description="Disordered" evidence="6">
    <location>
        <begin position="18"/>
        <end position="51"/>
    </location>
</feature>
<feature type="region of interest" description="Disordered" evidence="6">
    <location>
        <begin position="143"/>
        <end position="175"/>
    </location>
</feature>
<feature type="region of interest" description="Disordered" evidence="6">
    <location>
        <begin position="326"/>
        <end position="427"/>
    </location>
</feature>
<feature type="coiled-coil region" evidence="3">
    <location>
        <begin position="841"/>
        <end position="919"/>
    </location>
</feature>
<feature type="compositionally biased region" description="Low complexity" evidence="6">
    <location>
        <begin position="19"/>
        <end position="28"/>
    </location>
</feature>
<feature type="compositionally biased region" description="Polar residues" evidence="6">
    <location>
        <begin position="29"/>
        <end position="43"/>
    </location>
</feature>
<feature type="compositionally biased region" description="Polar residues" evidence="6">
    <location>
        <begin position="143"/>
        <end position="162"/>
    </location>
</feature>
<feature type="compositionally biased region" description="Low complexity" evidence="6">
    <location>
        <begin position="163"/>
        <end position="175"/>
    </location>
</feature>
<feature type="compositionally biased region" description="Low complexity" evidence="6">
    <location>
        <begin position="342"/>
        <end position="355"/>
    </location>
</feature>
<feature type="compositionally biased region" description="Low complexity" evidence="6">
    <location>
        <begin position="368"/>
        <end position="379"/>
    </location>
</feature>
<feature type="compositionally biased region" description="Basic and acidic residues" evidence="6">
    <location>
        <begin position="380"/>
        <end position="392"/>
    </location>
</feature>
<feature type="compositionally biased region" description="Basic and acidic residues" evidence="6">
    <location>
        <begin position="402"/>
        <end position="413"/>
    </location>
</feature>
<feature type="modified residue" description="Phosphoserine" evidence="7">
    <location>
        <position position="48"/>
    </location>
</feature>
<feature type="modified residue" description="Phosphothreonine" evidence="7">
    <location>
        <position position="66"/>
    </location>
</feature>
<feature type="modified residue" description="Phosphothreonine" evidence="7">
    <location>
        <position position="72"/>
    </location>
</feature>
<feature type="modified residue" description="Phosphothreonine" evidence="7">
    <location>
        <position position="82"/>
    </location>
</feature>
<feature type="modified residue" description="Phosphoserine" evidence="7">
    <location>
        <position position="83"/>
    </location>
</feature>
<feature type="modified residue" description="Phosphoserine" evidence="7">
    <location>
        <position position="91"/>
    </location>
</feature>
<feature type="modified residue" description="Phosphoserine" evidence="7">
    <location>
        <position position="139"/>
    </location>
</feature>
<feature type="modified residue" description="Phosphoserine" evidence="7">
    <location>
        <position position="165"/>
    </location>
</feature>
<feature type="modified residue" description="Phosphoserine" evidence="7">
    <location>
        <position position="167"/>
    </location>
</feature>
<feature type="modified residue" description="Phosphoserine" evidence="7">
    <location>
        <position position="169"/>
    </location>
</feature>
<feature type="modified residue" description="Phosphothreonine" evidence="7">
    <location>
        <position position="367"/>
    </location>
</feature>
<feature type="modified residue" description="Phosphoserine" evidence="7">
    <location>
        <position position="369"/>
    </location>
</feature>
<feature type="modified residue" description="Phosphoserine" evidence="7">
    <location>
        <position position="433"/>
    </location>
</feature>
<feature type="modified residue" description="Phosphoserine" evidence="7">
    <location>
        <position position="440"/>
    </location>
</feature>
<feature type="modified residue" description="Phosphoserine" evidence="7">
    <location>
        <position position="1064"/>
    </location>
</feature>
<feature type="modified residue" description="Phosphoserine" evidence="7">
    <location>
        <position position="1068"/>
    </location>
</feature>
<feature type="modified residue" description="Phosphoserine" evidence="7">
    <location>
        <position position="1088"/>
    </location>
</feature>
<feature type="modified residue" description="Phosphoserine" evidence="7">
    <location>
        <position position="1383"/>
    </location>
</feature>
<feature type="modified residue" description="Phosphoserine" evidence="7">
    <location>
        <position position="1385"/>
    </location>
</feature>